<organismHost>
    <name type="scientific">Ictaluridae</name>
    <name type="common">bullhead catfishes</name>
    <dbReference type="NCBI Taxonomy" id="7996"/>
</organismHost>
<protein>
    <recommendedName>
        <fullName>Uncharacterized protein ORF52</fullName>
    </recommendedName>
</protein>
<feature type="chain" id="PRO_0000222132" description="Uncharacterized protein ORF52">
    <location>
        <begin position="1"/>
        <end position="318"/>
    </location>
</feature>
<reference key="1">
    <citation type="journal article" date="1992" name="Virology">
        <title>Channel catfish virus: a new type of herpesvirus.</title>
        <authorList>
            <person name="Davison A.J."/>
        </authorList>
    </citation>
    <scope>NUCLEOTIDE SEQUENCE [LARGE SCALE GENOMIC DNA]</scope>
</reference>
<name>VG52_ICHVA</name>
<gene>
    <name type="primary">ORF52</name>
</gene>
<keyword id="KW-1185">Reference proteome</keyword>
<organism>
    <name type="scientific">Ictalurid herpesvirus 1 (strain Auburn)</name>
    <name type="common">IcHV-1</name>
    <name type="synonym">Channel catfish herpesvirus</name>
    <dbReference type="NCBI Taxonomy" id="766178"/>
    <lineage>
        <taxon>Viruses</taxon>
        <taxon>Duplodnaviria</taxon>
        <taxon>Heunggongvirae</taxon>
        <taxon>Peploviricota</taxon>
        <taxon>Herviviricetes</taxon>
        <taxon>Herpesvirales</taxon>
        <taxon>Alloherpesviridae</taxon>
        <taxon>Ictavirus</taxon>
        <taxon>Ictavirus ictaluridallo1</taxon>
        <taxon>Ictalurid herpesvirus 1</taxon>
    </lineage>
</organism>
<dbReference type="EMBL" id="M75136">
    <property type="protein sequence ID" value="AAA88155.1"/>
    <property type="molecule type" value="Genomic_DNA"/>
</dbReference>
<dbReference type="PIR" id="H36791">
    <property type="entry name" value="H36791"/>
</dbReference>
<dbReference type="RefSeq" id="NP_041143.1">
    <property type="nucleotide sequence ID" value="NC_001493.2"/>
</dbReference>
<dbReference type="GeneID" id="1488447"/>
<dbReference type="KEGG" id="vg:1488447"/>
<dbReference type="Proteomes" id="UP000007643">
    <property type="component" value="Segment"/>
</dbReference>
<accession>Q00121</accession>
<proteinExistence type="predicted"/>
<sequence>MEQQNPIPIITSITVTNISSVAAPHCTHLCQKTRINKYIDRHPAIARANGTPRLSAKKSPSSNIVPNSPAATRFSVTRAAAIRTRNVTERVIIIAPVTNVFRFRIAWTRFRSLTSNGVMLIINQESVLYNIRDIFRACTIDEEWNYLIRGNIIYSPLLDWDISTENEQHSSVLLLATPAREKSFVRLLEKASDHNPEIRNRLGRLRAFTESCVSQPIFNIFTLFNAMIPLESCKKLVLFLRQLQILQRYFVIKKSTVGFESVSLEPDAAGVPLPPEFIDAAVAVQIPPHKTTPWFFGVVPIGMCRWKEGVSKREVVSF</sequence>